<sequence>MADDLEQQSQGWLSSWLPTWRPTSMSQLKNVEARILQCLQNKFLARYVSLPNQNKIWTVTVSPEQNDRTPLVMVHGFGGGVGLWILNMDSLSARRTLHTFDLLGFGRSSRPAFPRDPEGAEDEFVTSIETWRETMGIPSMILLGHSLGGFLATSYSIKYPDRVKHLILVDPWGFPLRPTNPSEIRAPPAWVKAVASVLGRSNPLAVLRVAGPWGPGLVQRFRPDFKRKFADFFEDDTISEYIYHCNAQNPSGETAFKAMMESFGWARRPMLERIHLIRKDVPITMIYGSDTWIDTSTGKKVKMQRPDSYVRDMEIKGASHHVYADQPHIFNAVVEEICDSVD</sequence>
<comment type="function">
    <text evidence="1">Lysophospholipase selective for N-acyl phosphatidylethanolamine (NAPE). Contributes to the biosynthesis of N-acyl ethanolamines, including the endocannabinoid anandamide by hydrolyzing the sn-1 and sn-2 acyl chains from N-acyl phosphatidylethanolamine (NAPE) generating glycerophospho-N-acyl ethanolamine (GP-NAE), an intermediate for N-acyl ethanolamine biosynthesis. Hydrolyzes substrates bearing saturated, monounsaturated, polyunsaturated N-acyl chains. Shows no significant activity towards other lysophospholipids, including lysophosphatidylcholine, lysophosphatidylethanolamine and lysophosphatidylserine.</text>
</comment>
<comment type="catalytic activity">
    <reaction evidence="1">
        <text>N-hexadecanoyl-1,2-di-(9Z-octadecenoyl)-sn-glycero-3-phosphoethanolamine + H2O = N-hexadecanoyl-1-(9Z-octadecenoyl)-sn-glycero-3-phosphoethanolamine + (9Z)-octadecenoate + H(+)</text>
        <dbReference type="Rhea" id="RHEA:45424"/>
        <dbReference type="ChEBI" id="CHEBI:15377"/>
        <dbReference type="ChEBI" id="CHEBI:15378"/>
        <dbReference type="ChEBI" id="CHEBI:30823"/>
        <dbReference type="ChEBI" id="CHEBI:78097"/>
        <dbReference type="ChEBI" id="CHEBI:85217"/>
    </reaction>
    <physiologicalReaction direction="left-to-right" evidence="1">
        <dbReference type="Rhea" id="RHEA:45425"/>
    </physiologicalReaction>
</comment>
<comment type="catalytic activity">
    <reaction evidence="1">
        <text>an N-acyl-1,2-diacyl-sn-glycero-3-phosphoethanolamine + H2O = N,1-diacyl-sn-glycero-3-phosphoethanolamine + a fatty acid + H(+)</text>
        <dbReference type="Rhea" id="RHEA:45460"/>
        <dbReference type="ChEBI" id="CHEBI:15377"/>
        <dbReference type="ChEBI" id="CHEBI:15378"/>
        <dbReference type="ChEBI" id="CHEBI:28868"/>
        <dbReference type="ChEBI" id="CHEBI:62537"/>
        <dbReference type="ChEBI" id="CHEBI:85216"/>
    </reaction>
    <physiologicalReaction direction="left-to-right" evidence="1">
        <dbReference type="Rhea" id="RHEA:45461"/>
    </physiologicalReaction>
</comment>
<comment type="catalytic activity">
    <reaction evidence="1">
        <text>N-hexadecanoyl-1-(9Z-octadecenoyl)-sn-glycero-3-phosphoethanolamine + H2O = N-hexadecanoyl-sn-glycero-3-phosphoethanolamine + (9Z)-octadecenoate + H(+)</text>
        <dbReference type="Rhea" id="RHEA:45384"/>
        <dbReference type="ChEBI" id="CHEBI:15377"/>
        <dbReference type="ChEBI" id="CHEBI:15378"/>
        <dbReference type="ChEBI" id="CHEBI:30823"/>
        <dbReference type="ChEBI" id="CHEBI:85217"/>
        <dbReference type="ChEBI" id="CHEBI:85226"/>
    </reaction>
    <physiologicalReaction direction="left-to-right" evidence="1">
        <dbReference type="Rhea" id="RHEA:45385"/>
    </physiologicalReaction>
</comment>
<comment type="catalytic activity">
    <reaction evidence="1">
        <text>N-octadecanoyl-1-(9Z-octadecenoyl)-sn-glycero-3-phosphoethanolamine + H2O = N-octadecanoyl-sn-glycero-3-phospho-ethanolamine + (9Z)-octadecenoate + H(+)</text>
        <dbReference type="Rhea" id="RHEA:45388"/>
        <dbReference type="ChEBI" id="CHEBI:15377"/>
        <dbReference type="ChEBI" id="CHEBI:15378"/>
        <dbReference type="ChEBI" id="CHEBI:30823"/>
        <dbReference type="ChEBI" id="CHEBI:85219"/>
        <dbReference type="ChEBI" id="CHEBI:85227"/>
    </reaction>
    <physiologicalReaction direction="left-to-right" evidence="1">
        <dbReference type="Rhea" id="RHEA:45389"/>
    </physiologicalReaction>
</comment>
<comment type="catalytic activity">
    <reaction evidence="1">
        <text>N-eicosanoyl-1-(9Z-octadecenoyl)-sn-glycero-3-phosphoethanolamine + H2O = N-eicosanoyl-sn-glycero-3-phosphoethanolamine + (9Z)-octadecenoate + H(+)</text>
        <dbReference type="Rhea" id="RHEA:45392"/>
        <dbReference type="ChEBI" id="CHEBI:15377"/>
        <dbReference type="ChEBI" id="CHEBI:15378"/>
        <dbReference type="ChEBI" id="CHEBI:30823"/>
        <dbReference type="ChEBI" id="CHEBI:85221"/>
        <dbReference type="ChEBI" id="CHEBI:85228"/>
    </reaction>
    <physiologicalReaction direction="left-to-right" evidence="1">
        <dbReference type="Rhea" id="RHEA:45393"/>
    </physiologicalReaction>
</comment>
<comment type="catalytic activity">
    <reaction evidence="1">
        <text>N,1-di-(9Z-octadecenoyl)-sn-glycero-3-phosphoethanolamine + H2O = N-(9Z-octadecenoyl)-sn-glycero-3-phosphoethanolamine + (9Z)-octadecenoate + H(+)</text>
        <dbReference type="Rhea" id="RHEA:45396"/>
        <dbReference type="ChEBI" id="CHEBI:15377"/>
        <dbReference type="ChEBI" id="CHEBI:15378"/>
        <dbReference type="ChEBI" id="CHEBI:30823"/>
        <dbReference type="ChEBI" id="CHEBI:85222"/>
        <dbReference type="ChEBI" id="CHEBI:85229"/>
    </reaction>
    <physiologicalReaction direction="left-to-right" evidence="1">
        <dbReference type="Rhea" id="RHEA:45397"/>
    </physiologicalReaction>
</comment>
<comment type="catalytic activity">
    <reaction evidence="1">
        <text>N-(5Z,8Z,11Z,14Z-eicosatetraenoyl)-1-(9Z-octadecenoyl)-sn-glycero-3-phosphoethanolamine + H2O = N-(5Z,8Z,11Z,14Z-eicosatetraenoyl)-sn-glycero-3-phosphoethanolamine + (9Z)-octadecenoate + H(+)</text>
        <dbReference type="Rhea" id="RHEA:45400"/>
        <dbReference type="ChEBI" id="CHEBI:15377"/>
        <dbReference type="ChEBI" id="CHEBI:15378"/>
        <dbReference type="ChEBI" id="CHEBI:30823"/>
        <dbReference type="ChEBI" id="CHEBI:85223"/>
        <dbReference type="ChEBI" id="CHEBI:85230"/>
    </reaction>
    <physiologicalReaction direction="left-to-right" evidence="1">
        <dbReference type="Rhea" id="RHEA:45401"/>
    </physiologicalReaction>
</comment>
<comment type="catalytic activity">
    <reaction evidence="1">
        <text>1-octadecanoyl-2-(9Z-octadecenoyl)-sn-glycero-3-phospho-(N-hexadecanoyl)-serine + H2O = 1-octadecanoyl-2-hydroxy-sn-glycero-3-phospho-(N-hexadecanoyl)-serine + (9Z)-octadecenoate + H(+)</text>
        <dbReference type="Rhea" id="RHEA:55236"/>
        <dbReference type="ChEBI" id="CHEBI:15377"/>
        <dbReference type="ChEBI" id="CHEBI:15378"/>
        <dbReference type="ChEBI" id="CHEBI:30823"/>
        <dbReference type="ChEBI" id="CHEBI:138661"/>
        <dbReference type="ChEBI" id="CHEBI:138662"/>
    </reaction>
    <physiologicalReaction direction="left-to-right" evidence="1">
        <dbReference type="Rhea" id="RHEA:55237"/>
    </physiologicalReaction>
</comment>
<comment type="catalytic activity">
    <reaction evidence="1">
        <text>1-O-(1Z-octadecenoyl)-2-(9Z-octadecenoyl)-sn-glycero-3-phospho-N-hexadecanoyl-ethanolamine + H2O = 1-O-(1Z-octadecenyl)-sn-glycero-3-phospho-N-hexadecanoyl-ethanolamine + (9Z)-octadecenoate + H(+)</text>
        <dbReference type="Rhea" id="RHEA:55240"/>
        <dbReference type="ChEBI" id="CHEBI:15377"/>
        <dbReference type="ChEBI" id="CHEBI:15378"/>
        <dbReference type="ChEBI" id="CHEBI:30823"/>
        <dbReference type="ChEBI" id="CHEBI:137009"/>
        <dbReference type="ChEBI" id="CHEBI:138663"/>
    </reaction>
    <physiologicalReaction direction="left-to-right" evidence="1">
        <dbReference type="Rhea" id="RHEA:55241"/>
    </physiologicalReaction>
</comment>
<comment type="catalytic activity">
    <reaction evidence="1">
        <text>N,1-diacyl-sn-glycero-3-phosphoethanolamine + H2O = N-acyl-sn-glycero-3-phosphoethanolamine + a fatty acid + H(+)</text>
        <dbReference type="Rhea" id="RHEA:45420"/>
        <dbReference type="ChEBI" id="CHEBI:15377"/>
        <dbReference type="ChEBI" id="CHEBI:15378"/>
        <dbReference type="ChEBI" id="CHEBI:28868"/>
        <dbReference type="ChEBI" id="CHEBI:85216"/>
        <dbReference type="ChEBI" id="CHEBI:85225"/>
    </reaction>
    <physiologicalReaction direction="left-to-right" evidence="1">
        <dbReference type="Rhea" id="RHEA:45421"/>
    </physiologicalReaction>
</comment>
<comment type="interaction">
    <interactant intactId="EBI-7131019">
        <id>Q8TB40</id>
    </interactant>
    <interactant intactId="EBI-448665">
        <id>Q9NWT8</id>
        <label>AURKAIP1</label>
    </interactant>
    <organismsDiffer>false</organismsDiffer>
    <experiments>3</experiments>
</comment>
<comment type="interaction">
    <interactant intactId="EBI-7131019">
        <id>Q8TB40</id>
    </interactant>
    <interactant intactId="EBI-752094">
        <id>Q12982</id>
        <label>BNIP2</label>
    </interactant>
    <organismsDiffer>false</organismsDiffer>
    <experiments>3</experiments>
</comment>
<comment type="interaction">
    <interactant intactId="EBI-7131019">
        <id>Q8TB40</id>
    </interactant>
    <interactant intactId="EBI-11522780">
        <id>Q96DZ9-2</id>
        <label>CMTM5</label>
    </interactant>
    <organismsDiffer>false</organismsDiffer>
    <experiments>3</experiments>
</comment>
<comment type="interaction">
    <interactant intactId="EBI-7131019">
        <id>Q8TB40</id>
    </interactant>
    <interactant intactId="EBI-12211159">
        <id>P29400-2</id>
        <label>COL4A5</label>
    </interactant>
    <organismsDiffer>false</organismsDiffer>
    <experiments>3</experiments>
</comment>
<comment type="interaction">
    <interactant intactId="EBI-7131019">
        <id>Q8TB40</id>
    </interactant>
    <interactant intactId="EBI-398977">
        <id>Q9BUN8</id>
        <label>DERL1</label>
    </interactant>
    <organismsDiffer>false</organismsDiffer>
    <experiments>3</experiments>
</comment>
<comment type="interaction">
    <interactant intactId="EBI-7131019">
        <id>Q8TB40</id>
    </interactant>
    <interactant intactId="EBI-12831978">
        <id>Q6ZPD8</id>
        <label>DGAT2L6</label>
    </interactant>
    <organismsDiffer>false</organismsDiffer>
    <experiments>3</experiments>
</comment>
<comment type="interaction">
    <interactant intactId="EBI-7131019">
        <id>Q8TB40</id>
    </interactant>
    <interactant intactId="EBI-12937691">
        <id>Q9BUP3-3</id>
        <label>HTATIP2</label>
    </interactant>
    <organismsDiffer>false</organismsDiffer>
    <experiments>3</experiments>
</comment>
<comment type="interaction">
    <interactant intactId="EBI-7131019">
        <id>Q8TB40</id>
    </interactant>
    <interactant intactId="EBI-720480">
        <id>P24593</id>
        <label>IGFBP5</label>
    </interactant>
    <organismsDiffer>false</organismsDiffer>
    <experiments>3</experiments>
</comment>
<comment type="interaction">
    <interactant intactId="EBI-7131019">
        <id>Q8TB40</id>
    </interactant>
    <interactant intactId="EBI-8503746">
        <id>Q9Y5U4</id>
        <label>INSIG2</label>
    </interactant>
    <organismsDiffer>false</organismsDiffer>
    <experiments>3</experiments>
</comment>
<comment type="interaction">
    <interactant intactId="EBI-7131019">
        <id>Q8TB40</id>
    </interactant>
    <interactant intactId="EBI-725795">
        <id>O60664</id>
        <label>PLIN3</label>
    </interactant>
    <organismsDiffer>false</organismsDiffer>
    <experiments>3</experiments>
</comment>
<comment type="interaction">
    <interactant intactId="EBI-7131019">
        <id>Q8TB40</id>
    </interactant>
    <interactant intactId="EBI-712367">
        <id>Q9UI14</id>
        <label>RABAC1</label>
    </interactant>
    <organismsDiffer>false</organismsDiffer>
    <experiments>3</experiments>
</comment>
<comment type="interaction">
    <interactant intactId="EBI-7131019">
        <id>Q8TB40</id>
    </interactant>
    <interactant intactId="EBI-1549827">
        <id>Q00765</id>
        <label>REEP5</label>
    </interactant>
    <organismsDiffer>false</organismsDiffer>
    <experiments>3</experiments>
</comment>
<comment type="alternative products">
    <event type="alternative splicing"/>
    <isoform>
        <id>Q8TB40-1</id>
        <name>1</name>
        <sequence type="displayed"/>
    </isoform>
    <isoform>
        <id>Q8TB40-2</id>
        <name>2</name>
        <sequence type="described" ref="VSP_056924 VSP_056925"/>
    </isoform>
</comment>
<comment type="similarity">
    <text evidence="4">Belongs to the peptidase S33 family. ABHD4/ABHD5 subfamily.</text>
</comment>
<comment type="caution">
    <text evidence="4">Thr-291 is present instead of the conserved His which is expected to be an active site residue.</text>
</comment>
<proteinExistence type="evidence at protein level"/>
<organism>
    <name type="scientific">Homo sapiens</name>
    <name type="common">Human</name>
    <dbReference type="NCBI Taxonomy" id="9606"/>
    <lineage>
        <taxon>Eukaryota</taxon>
        <taxon>Metazoa</taxon>
        <taxon>Chordata</taxon>
        <taxon>Craniata</taxon>
        <taxon>Vertebrata</taxon>
        <taxon>Euteleostomi</taxon>
        <taxon>Mammalia</taxon>
        <taxon>Eutheria</taxon>
        <taxon>Euarchontoglires</taxon>
        <taxon>Primates</taxon>
        <taxon>Haplorrhini</taxon>
        <taxon>Catarrhini</taxon>
        <taxon>Hominidae</taxon>
        <taxon>Homo</taxon>
    </lineage>
</organism>
<keyword id="KW-0025">Alternative splicing</keyword>
<keyword id="KW-0378">Hydrolase</keyword>
<keyword id="KW-0442">Lipid degradation</keyword>
<keyword id="KW-0443">Lipid metabolism</keyword>
<keyword id="KW-1267">Proteomics identification</keyword>
<keyword id="KW-1185">Reference proteome</keyword>
<name>ABHD4_HUMAN</name>
<reference key="1">
    <citation type="journal article" date="2004" name="Nat. Genet.">
        <title>Complete sequencing and characterization of 21,243 full-length human cDNAs.</title>
        <authorList>
            <person name="Ota T."/>
            <person name="Suzuki Y."/>
            <person name="Nishikawa T."/>
            <person name="Otsuki T."/>
            <person name="Sugiyama T."/>
            <person name="Irie R."/>
            <person name="Wakamatsu A."/>
            <person name="Hayashi K."/>
            <person name="Sato H."/>
            <person name="Nagai K."/>
            <person name="Kimura K."/>
            <person name="Makita H."/>
            <person name="Sekine M."/>
            <person name="Obayashi M."/>
            <person name="Nishi T."/>
            <person name="Shibahara T."/>
            <person name="Tanaka T."/>
            <person name="Ishii S."/>
            <person name="Yamamoto J."/>
            <person name="Saito K."/>
            <person name="Kawai Y."/>
            <person name="Isono Y."/>
            <person name="Nakamura Y."/>
            <person name="Nagahari K."/>
            <person name="Murakami K."/>
            <person name="Yasuda T."/>
            <person name="Iwayanagi T."/>
            <person name="Wagatsuma M."/>
            <person name="Shiratori A."/>
            <person name="Sudo H."/>
            <person name="Hosoiri T."/>
            <person name="Kaku Y."/>
            <person name="Kodaira H."/>
            <person name="Kondo H."/>
            <person name="Sugawara M."/>
            <person name="Takahashi M."/>
            <person name="Kanda K."/>
            <person name="Yokoi T."/>
            <person name="Furuya T."/>
            <person name="Kikkawa E."/>
            <person name="Omura Y."/>
            <person name="Abe K."/>
            <person name="Kamihara K."/>
            <person name="Katsuta N."/>
            <person name="Sato K."/>
            <person name="Tanikawa M."/>
            <person name="Yamazaki M."/>
            <person name="Ninomiya K."/>
            <person name="Ishibashi T."/>
            <person name="Yamashita H."/>
            <person name="Murakawa K."/>
            <person name="Fujimori K."/>
            <person name="Tanai H."/>
            <person name="Kimata M."/>
            <person name="Watanabe M."/>
            <person name="Hiraoka S."/>
            <person name="Chiba Y."/>
            <person name="Ishida S."/>
            <person name="Ono Y."/>
            <person name="Takiguchi S."/>
            <person name="Watanabe S."/>
            <person name="Yosida M."/>
            <person name="Hotuta T."/>
            <person name="Kusano J."/>
            <person name="Kanehori K."/>
            <person name="Takahashi-Fujii A."/>
            <person name="Hara H."/>
            <person name="Tanase T.-O."/>
            <person name="Nomura Y."/>
            <person name="Togiya S."/>
            <person name="Komai F."/>
            <person name="Hara R."/>
            <person name="Takeuchi K."/>
            <person name="Arita M."/>
            <person name="Imose N."/>
            <person name="Musashino K."/>
            <person name="Yuuki H."/>
            <person name="Oshima A."/>
            <person name="Sasaki N."/>
            <person name="Aotsuka S."/>
            <person name="Yoshikawa Y."/>
            <person name="Matsunawa H."/>
            <person name="Ichihara T."/>
            <person name="Shiohata N."/>
            <person name="Sano S."/>
            <person name="Moriya S."/>
            <person name="Momiyama H."/>
            <person name="Satoh N."/>
            <person name="Takami S."/>
            <person name="Terashima Y."/>
            <person name="Suzuki O."/>
            <person name="Nakagawa S."/>
            <person name="Senoh A."/>
            <person name="Mizoguchi H."/>
            <person name="Goto Y."/>
            <person name="Shimizu F."/>
            <person name="Wakebe H."/>
            <person name="Hishigaki H."/>
            <person name="Watanabe T."/>
            <person name="Sugiyama A."/>
            <person name="Takemoto M."/>
            <person name="Kawakami B."/>
            <person name="Yamazaki M."/>
            <person name="Watanabe K."/>
            <person name="Kumagai A."/>
            <person name="Itakura S."/>
            <person name="Fukuzumi Y."/>
            <person name="Fujimori Y."/>
            <person name="Komiyama M."/>
            <person name="Tashiro H."/>
            <person name="Tanigami A."/>
            <person name="Fujiwara T."/>
            <person name="Ono T."/>
            <person name="Yamada K."/>
            <person name="Fujii Y."/>
            <person name="Ozaki K."/>
            <person name="Hirao M."/>
            <person name="Ohmori Y."/>
            <person name="Kawabata A."/>
            <person name="Hikiji T."/>
            <person name="Kobatake N."/>
            <person name="Inagaki H."/>
            <person name="Ikema Y."/>
            <person name="Okamoto S."/>
            <person name="Okitani R."/>
            <person name="Kawakami T."/>
            <person name="Noguchi S."/>
            <person name="Itoh T."/>
            <person name="Shigeta K."/>
            <person name="Senba T."/>
            <person name="Matsumura K."/>
            <person name="Nakajima Y."/>
            <person name="Mizuno T."/>
            <person name="Morinaga M."/>
            <person name="Sasaki M."/>
            <person name="Togashi T."/>
            <person name="Oyama M."/>
            <person name="Hata H."/>
            <person name="Watanabe M."/>
            <person name="Komatsu T."/>
            <person name="Mizushima-Sugano J."/>
            <person name="Satoh T."/>
            <person name="Shirai Y."/>
            <person name="Takahashi Y."/>
            <person name="Nakagawa K."/>
            <person name="Okumura K."/>
            <person name="Nagase T."/>
            <person name="Nomura N."/>
            <person name="Kikuchi H."/>
            <person name="Masuho Y."/>
            <person name="Yamashita R."/>
            <person name="Nakai K."/>
            <person name="Yada T."/>
            <person name="Nakamura Y."/>
            <person name="Ohara O."/>
            <person name="Isogai T."/>
            <person name="Sugano S."/>
        </authorList>
    </citation>
    <scope>NUCLEOTIDE SEQUENCE [LARGE SCALE MRNA] (ISOFORMS 1 AND 2)</scope>
    <source>
        <tissue>Adrenal gland</tissue>
    </source>
</reference>
<reference key="2">
    <citation type="journal article" date="2003" name="Nature">
        <title>The DNA sequence and analysis of human chromosome 14.</title>
        <authorList>
            <person name="Heilig R."/>
            <person name="Eckenberg R."/>
            <person name="Petit J.-L."/>
            <person name="Fonknechten N."/>
            <person name="Da Silva C."/>
            <person name="Cattolico L."/>
            <person name="Levy M."/>
            <person name="Barbe V."/>
            <person name="De Berardinis V."/>
            <person name="Ureta-Vidal A."/>
            <person name="Pelletier E."/>
            <person name="Vico V."/>
            <person name="Anthouard V."/>
            <person name="Rowen L."/>
            <person name="Madan A."/>
            <person name="Qin S."/>
            <person name="Sun H."/>
            <person name="Du H."/>
            <person name="Pepin K."/>
            <person name="Artiguenave F."/>
            <person name="Robert C."/>
            <person name="Cruaud C."/>
            <person name="Bruels T."/>
            <person name="Jaillon O."/>
            <person name="Friedlander L."/>
            <person name="Samson G."/>
            <person name="Brottier P."/>
            <person name="Cure S."/>
            <person name="Segurens B."/>
            <person name="Aniere F."/>
            <person name="Samain S."/>
            <person name="Crespeau H."/>
            <person name="Abbasi N."/>
            <person name="Aiach N."/>
            <person name="Boscus D."/>
            <person name="Dickhoff R."/>
            <person name="Dors M."/>
            <person name="Dubois I."/>
            <person name="Friedman C."/>
            <person name="Gouyvenoux M."/>
            <person name="James R."/>
            <person name="Madan A."/>
            <person name="Mairey-Estrada B."/>
            <person name="Mangenot S."/>
            <person name="Martins N."/>
            <person name="Menard M."/>
            <person name="Oztas S."/>
            <person name="Ratcliffe A."/>
            <person name="Shaffer T."/>
            <person name="Trask B."/>
            <person name="Vacherie B."/>
            <person name="Bellemere C."/>
            <person name="Belser C."/>
            <person name="Besnard-Gonnet M."/>
            <person name="Bartol-Mavel D."/>
            <person name="Boutard M."/>
            <person name="Briez-Silla S."/>
            <person name="Combette S."/>
            <person name="Dufosse-Laurent V."/>
            <person name="Ferron C."/>
            <person name="Lechaplais C."/>
            <person name="Louesse C."/>
            <person name="Muselet D."/>
            <person name="Magdelenat G."/>
            <person name="Pateau E."/>
            <person name="Petit E."/>
            <person name="Sirvain-Trukniewicz P."/>
            <person name="Trybou A."/>
            <person name="Vega-Czarny N."/>
            <person name="Bataille E."/>
            <person name="Bluet E."/>
            <person name="Bordelais I."/>
            <person name="Dubois M."/>
            <person name="Dumont C."/>
            <person name="Guerin T."/>
            <person name="Haffray S."/>
            <person name="Hammadi R."/>
            <person name="Muanga J."/>
            <person name="Pellouin V."/>
            <person name="Robert D."/>
            <person name="Wunderle E."/>
            <person name="Gauguet G."/>
            <person name="Roy A."/>
            <person name="Sainte-Marthe L."/>
            <person name="Verdier J."/>
            <person name="Verdier-Discala C."/>
            <person name="Hillier L.W."/>
            <person name="Fulton L."/>
            <person name="McPherson J."/>
            <person name="Matsuda F."/>
            <person name="Wilson R."/>
            <person name="Scarpelli C."/>
            <person name="Gyapay G."/>
            <person name="Wincker P."/>
            <person name="Saurin W."/>
            <person name="Quetier F."/>
            <person name="Waterston R."/>
            <person name="Hood L."/>
            <person name="Weissenbach J."/>
        </authorList>
    </citation>
    <scope>NUCLEOTIDE SEQUENCE [LARGE SCALE GENOMIC DNA]</scope>
</reference>
<reference key="3">
    <citation type="journal article" date="2004" name="Genome Res.">
        <title>The status, quality, and expansion of the NIH full-length cDNA project: the Mammalian Gene Collection (MGC).</title>
        <authorList>
            <consortium name="The MGC Project Team"/>
        </authorList>
    </citation>
    <scope>NUCLEOTIDE SEQUENCE [LARGE SCALE MRNA] (ISOFORM 1)</scope>
    <source>
        <tissue>Cervix</tissue>
    </source>
</reference>
<dbReference type="EC" id="3.1.1.-"/>
<dbReference type="EMBL" id="AK022878">
    <property type="protein sequence ID" value="BAB14289.1"/>
    <property type="molecule type" value="mRNA"/>
</dbReference>
<dbReference type="EMBL" id="AK293198">
    <property type="protein sequence ID" value="BAG56738.1"/>
    <property type="molecule type" value="mRNA"/>
</dbReference>
<dbReference type="EMBL" id="AL160314">
    <property type="status" value="NOT_ANNOTATED_CDS"/>
    <property type="molecule type" value="Genomic_DNA"/>
</dbReference>
<dbReference type="EMBL" id="BC024779">
    <property type="protein sequence ID" value="AAH24779.1"/>
    <property type="molecule type" value="mRNA"/>
</dbReference>
<dbReference type="CCDS" id="CCDS9572.1">
    <molecule id="Q8TB40-1"/>
</dbReference>
<dbReference type="RefSeq" id="NP_071343.2">
    <molecule id="Q8TB40-1"/>
    <property type="nucleotide sequence ID" value="NM_022060.3"/>
</dbReference>
<dbReference type="SMR" id="Q8TB40"/>
<dbReference type="BioGRID" id="121967">
    <property type="interactions" value="16"/>
</dbReference>
<dbReference type="FunCoup" id="Q8TB40">
    <property type="interactions" value="785"/>
</dbReference>
<dbReference type="IntAct" id="Q8TB40">
    <property type="interactions" value="15"/>
</dbReference>
<dbReference type="MINT" id="Q8TB40"/>
<dbReference type="STRING" id="9606.ENSP00000414558"/>
<dbReference type="ESTHER" id="human-ABHD4">
    <property type="family name" value="CGI-58_ABHD5_ABHD4"/>
</dbReference>
<dbReference type="MEROPS" id="S33.013"/>
<dbReference type="iPTMnet" id="Q8TB40"/>
<dbReference type="PhosphoSitePlus" id="Q8TB40"/>
<dbReference type="BioMuta" id="ABHD4"/>
<dbReference type="DMDM" id="74762601"/>
<dbReference type="jPOST" id="Q8TB40"/>
<dbReference type="MassIVE" id="Q8TB40"/>
<dbReference type="PaxDb" id="9606-ENSP00000414558"/>
<dbReference type="PeptideAtlas" id="Q8TB40"/>
<dbReference type="ProteomicsDB" id="3863"/>
<dbReference type="ProteomicsDB" id="73960">
    <molecule id="Q8TB40-1"/>
</dbReference>
<dbReference type="Pumba" id="Q8TB40"/>
<dbReference type="Antibodypedia" id="4">
    <property type="antibodies" value="222 antibodies from 30 providers"/>
</dbReference>
<dbReference type="DNASU" id="63874"/>
<dbReference type="Ensembl" id="ENST00000418446.6">
    <molecule id="Q8TB40-2"/>
    <property type="protein sequence ID" value="ENSP00000388751.2"/>
    <property type="gene ID" value="ENSG00000100439.11"/>
</dbReference>
<dbReference type="Ensembl" id="ENST00000428304.7">
    <molecule id="Q8TB40-1"/>
    <property type="protein sequence ID" value="ENSP00000414558.2"/>
    <property type="gene ID" value="ENSG00000100439.11"/>
</dbReference>
<dbReference type="GeneID" id="63874"/>
<dbReference type="KEGG" id="hsa:63874"/>
<dbReference type="MANE-Select" id="ENST00000428304.7">
    <property type="protein sequence ID" value="ENSP00000414558.2"/>
    <property type="RefSeq nucleotide sequence ID" value="NM_022060.3"/>
    <property type="RefSeq protein sequence ID" value="NP_071343.2"/>
</dbReference>
<dbReference type="UCSC" id="uc001wgm.4">
    <molecule id="Q8TB40-1"/>
    <property type="organism name" value="human"/>
</dbReference>
<dbReference type="AGR" id="HGNC:20154"/>
<dbReference type="CTD" id="63874"/>
<dbReference type="DisGeNET" id="63874"/>
<dbReference type="GeneCards" id="ABHD4"/>
<dbReference type="HGNC" id="HGNC:20154">
    <property type="gene designation" value="ABHD4"/>
</dbReference>
<dbReference type="HPA" id="ENSG00000100439">
    <property type="expression patterns" value="Low tissue specificity"/>
</dbReference>
<dbReference type="MIM" id="619728">
    <property type="type" value="gene"/>
</dbReference>
<dbReference type="neXtProt" id="NX_Q8TB40"/>
<dbReference type="OpenTargets" id="ENSG00000100439"/>
<dbReference type="PharmGKB" id="PA128394705"/>
<dbReference type="VEuPathDB" id="HostDB:ENSG00000100439"/>
<dbReference type="eggNOG" id="KOG4409">
    <property type="taxonomic scope" value="Eukaryota"/>
</dbReference>
<dbReference type="GeneTree" id="ENSGT00390000016277"/>
<dbReference type="HOGENOM" id="CLU_017361_0_0_1"/>
<dbReference type="InParanoid" id="Q8TB40"/>
<dbReference type="OMA" id="ETAYHAM"/>
<dbReference type="OrthoDB" id="7457040at2759"/>
<dbReference type="PAN-GO" id="Q8TB40">
    <property type="GO annotations" value="6 GO annotations based on evolutionary models"/>
</dbReference>
<dbReference type="PhylomeDB" id="Q8TB40"/>
<dbReference type="TreeFam" id="TF314196"/>
<dbReference type="BioCyc" id="MetaCyc:ENSG00000100439-MONOMER"/>
<dbReference type="PathwayCommons" id="Q8TB40"/>
<dbReference type="Reactome" id="R-HSA-1482839">
    <property type="pathway name" value="Acyl chain remodelling of PE"/>
</dbReference>
<dbReference type="SignaLink" id="Q8TB40"/>
<dbReference type="BioGRID-ORCS" id="63874">
    <property type="hits" value="6 hits in 1155 CRISPR screens"/>
</dbReference>
<dbReference type="ChiTaRS" id="ABHD4">
    <property type="organism name" value="human"/>
</dbReference>
<dbReference type="GenomeRNAi" id="63874"/>
<dbReference type="Pharos" id="Q8TB40">
    <property type="development level" value="Tbio"/>
</dbReference>
<dbReference type="PRO" id="PR:Q8TB40"/>
<dbReference type="Proteomes" id="UP000005640">
    <property type="component" value="Chromosome 14"/>
</dbReference>
<dbReference type="RNAct" id="Q8TB40">
    <property type="molecule type" value="protein"/>
</dbReference>
<dbReference type="Bgee" id="ENSG00000100439">
    <property type="expression patterns" value="Expressed in lower esophagus mucosa and 161 other cell types or tissues"/>
</dbReference>
<dbReference type="ExpressionAtlas" id="Q8TB40">
    <property type="expression patterns" value="baseline and differential"/>
</dbReference>
<dbReference type="GO" id="GO:0005789">
    <property type="term" value="C:endoplasmic reticulum membrane"/>
    <property type="evidence" value="ECO:0000304"/>
    <property type="project" value="Reactome"/>
</dbReference>
<dbReference type="GO" id="GO:0005811">
    <property type="term" value="C:lipid droplet"/>
    <property type="evidence" value="ECO:0000318"/>
    <property type="project" value="GO_Central"/>
</dbReference>
<dbReference type="GO" id="GO:0005739">
    <property type="term" value="C:mitochondrion"/>
    <property type="evidence" value="ECO:0000318"/>
    <property type="project" value="GO_Central"/>
</dbReference>
<dbReference type="GO" id="GO:0052689">
    <property type="term" value="F:carboxylic ester hydrolase activity"/>
    <property type="evidence" value="ECO:0000318"/>
    <property type="project" value="GO_Central"/>
</dbReference>
<dbReference type="GO" id="GO:0016787">
    <property type="term" value="F:hydrolase activity"/>
    <property type="evidence" value="ECO:0000304"/>
    <property type="project" value="Reactome"/>
</dbReference>
<dbReference type="GO" id="GO:0042171">
    <property type="term" value="F:lysophosphatidic acid acyltransferase activity"/>
    <property type="evidence" value="ECO:0000318"/>
    <property type="project" value="GO_Central"/>
</dbReference>
<dbReference type="GO" id="GO:0004622">
    <property type="term" value="F:lysophospholipase activity"/>
    <property type="evidence" value="ECO:0000318"/>
    <property type="project" value="GO_Central"/>
</dbReference>
<dbReference type="GO" id="GO:0016042">
    <property type="term" value="P:lipid catabolic process"/>
    <property type="evidence" value="ECO:0007669"/>
    <property type="project" value="UniProtKB-KW"/>
</dbReference>
<dbReference type="GO" id="GO:0055088">
    <property type="term" value="P:lipid homeostasis"/>
    <property type="evidence" value="ECO:0000318"/>
    <property type="project" value="GO_Central"/>
</dbReference>
<dbReference type="GO" id="GO:0070292">
    <property type="term" value="P:N-acylphosphatidylethanolamine metabolic process"/>
    <property type="evidence" value="ECO:0000250"/>
    <property type="project" value="UniProtKB"/>
</dbReference>
<dbReference type="GO" id="GO:0006654">
    <property type="term" value="P:phosphatidic acid biosynthetic process"/>
    <property type="evidence" value="ECO:0000318"/>
    <property type="project" value="GO_Central"/>
</dbReference>
<dbReference type="GO" id="GO:0036152">
    <property type="term" value="P:phosphatidylethanolamine acyl-chain remodeling"/>
    <property type="evidence" value="ECO:0000304"/>
    <property type="project" value="Reactome"/>
</dbReference>
<dbReference type="FunFam" id="3.40.50.1820:FF:000044">
    <property type="entry name" value="Abhydrolase domain containing 4"/>
    <property type="match status" value="1"/>
</dbReference>
<dbReference type="Gene3D" id="3.40.50.1820">
    <property type="entry name" value="alpha/beta hydrolase"/>
    <property type="match status" value="1"/>
</dbReference>
<dbReference type="InterPro" id="IPR000073">
    <property type="entry name" value="AB_hydrolase_1"/>
</dbReference>
<dbReference type="InterPro" id="IPR029058">
    <property type="entry name" value="AB_hydrolase_fold"/>
</dbReference>
<dbReference type="PANTHER" id="PTHR42886:SF21">
    <property type="entry name" value="(LYSO)-N-ACYLPHOSPHATIDYLETHANOLAMINE LIPASE"/>
    <property type="match status" value="1"/>
</dbReference>
<dbReference type="PANTHER" id="PTHR42886">
    <property type="entry name" value="RE40534P-RELATED"/>
    <property type="match status" value="1"/>
</dbReference>
<dbReference type="Pfam" id="PF00561">
    <property type="entry name" value="Abhydrolase_1"/>
    <property type="match status" value="1"/>
</dbReference>
<dbReference type="PRINTS" id="PR00111">
    <property type="entry name" value="ABHYDROLASE"/>
</dbReference>
<dbReference type="SUPFAM" id="SSF53474">
    <property type="entry name" value="alpha/beta-Hydrolases"/>
    <property type="match status" value="1"/>
</dbReference>
<accession>Q8TB40</accession>
<accession>B4DDH7</accession>
<accession>Q9H9E0</accession>
<evidence type="ECO:0000250" key="1">
    <source>
        <dbReference type="UniProtKB" id="Q8VD66"/>
    </source>
</evidence>
<evidence type="ECO:0000255" key="2"/>
<evidence type="ECO:0000303" key="3">
    <source>
    </source>
</evidence>
<evidence type="ECO:0000305" key="4"/>
<evidence type="ECO:0000312" key="5">
    <source>
        <dbReference type="HGNC" id="HGNC:20154"/>
    </source>
</evidence>
<gene>
    <name evidence="5" type="primary">ABHD4</name>
</gene>
<protein>
    <recommendedName>
        <fullName evidence="4">(Lyso)-N-acylphosphatidylethanolamine lipase</fullName>
        <ecNumber>3.1.1.-</ecNumber>
    </recommendedName>
    <alternativeName>
        <fullName evidence="4">Alpha/beta hydrolase domain-containing protein 4</fullName>
        <shortName evidence="5">Abhydrolase domain-containing protein 4</shortName>
    </alternativeName>
    <alternativeName>
        <fullName>Alpha/beta-hydrolase 4</fullName>
    </alternativeName>
</protein>
<feature type="chain" id="PRO_0000080864" description="(Lyso)-N-acylphosphatidylethanolamine lipase">
    <location>
        <begin position="1"/>
        <end position="342"/>
    </location>
</feature>
<feature type="domain" description="AB hydrolase-1" evidence="2">
    <location>
        <begin position="70"/>
        <end position="201"/>
    </location>
</feature>
<feature type="splice variant" id="VSP_056924" description="In isoform 2." evidence="3">
    <original>VKHLILVDPWGFPLRPTNP</original>
    <variation>AWSGAAIPAGLQTQVCRLL</variation>
    <location>
        <begin position="163"/>
        <end position="181"/>
    </location>
</feature>
<feature type="splice variant" id="VSP_056925" description="In isoform 2." evidence="3">
    <location>
        <begin position="182"/>
        <end position="342"/>
    </location>
</feature>
<feature type="sequence conflict" description="In Ref. 1; BAB14289." evidence="4" ref="1">
    <original>EIR</original>
    <variation>GIC</variation>
    <location>
        <begin position="183"/>
        <end position="185"/>
    </location>
</feature>